<organism>
    <name type="scientific">Dictyostelium discoideum</name>
    <name type="common">Social amoeba</name>
    <dbReference type="NCBI Taxonomy" id="44689"/>
    <lineage>
        <taxon>Eukaryota</taxon>
        <taxon>Amoebozoa</taxon>
        <taxon>Evosea</taxon>
        <taxon>Eumycetozoa</taxon>
        <taxon>Dictyostelia</taxon>
        <taxon>Dictyosteliales</taxon>
        <taxon>Dictyosteliaceae</taxon>
        <taxon>Dictyostelium</taxon>
    </lineage>
</organism>
<proteinExistence type="inferred from homology"/>
<evidence type="ECO:0000250" key="1">
    <source>
        <dbReference type="UniProtKB" id="Q96GQ7"/>
    </source>
</evidence>
<evidence type="ECO:0000255" key="2"/>
<evidence type="ECO:0000255" key="3">
    <source>
        <dbReference type="PROSITE-ProRule" id="PRU00541"/>
    </source>
</evidence>
<evidence type="ECO:0000255" key="4">
    <source>
        <dbReference type="PROSITE-ProRule" id="PRU00542"/>
    </source>
</evidence>
<evidence type="ECO:0000256" key="5">
    <source>
        <dbReference type="SAM" id="MobiDB-lite"/>
    </source>
</evidence>
<evidence type="ECO:0000305" key="6"/>
<dbReference type="EC" id="3.6.4.13"/>
<dbReference type="EMBL" id="AAFI02000042">
    <property type="protein sequence ID" value="EAL66617.1"/>
    <property type="molecule type" value="Genomic_DNA"/>
</dbReference>
<dbReference type="RefSeq" id="XP_640597.1">
    <property type="nucleotide sequence ID" value="XM_635505.1"/>
</dbReference>
<dbReference type="SMR" id="Q54TJ4"/>
<dbReference type="FunCoup" id="Q54TJ4">
    <property type="interactions" value="407"/>
</dbReference>
<dbReference type="STRING" id="44689.Q54TJ4"/>
<dbReference type="PaxDb" id="44689-DDB0234201"/>
<dbReference type="EnsemblProtists" id="EAL66617">
    <property type="protein sequence ID" value="EAL66617"/>
    <property type="gene ID" value="DDB_G0281711"/>
</dbReference>
<dbReference type="GeneID" id="8623207"/>
<dbReference type="KEGG" id="ddi:DDB_G0281711"/>
<dbReference type="dictyBase" id="DDB_G0281711">
    <property type="gene designation" value="ddx27"/>
</dbReference>
<dbReference type="VEuPathDB" id="AmoebaDB:DDB_G0281711"/>
<dbReference type="eggNOG" id="KOG0338">
    <property type="taxonomic scope" value="Eukaryota"/>
</dbReference>
<dbReference type="HOGENOM" id="CLU_003041_3_3_1"/>
<dbReference type="InParanoid" id="Q54TJ4"/>
<dbReference type="OMA" id="MIDPPKQ"/>
<dbReference type="PhylomeDB" id="Q54TJ4"/>
<dbReference type="PRO" id="PR:Q54TJ4"/>
<dbReference type="Proteomes" id="UP000002195">
    <property type="component" value="Chromosome 3"/>
</dbReference>
<dbReference type="GO" id="GO:0005694">
    <property type="term" value="C:chromosome"/>
    <property type="evidence" value="ECO:0000250"/>
    <property type="project" value="UniProtKB"/>
</dbReference>
<dbReference type="GO" id="GO:0005730">
    <property type="term" value="C:nucleolus"/>
    <property type="evidence" value="ECO:0000250"/>
    <property type="project" value="UniProtKB"/>
</dbReference>
<dbReference type="GO" id="GO:0005524">
    <property type="term" value="F:ATP binding"/>
    <property type="evidence" value="ECO:0007669"/>
    <property type="project" value="UniProtKB-KW"/>
</dbReference>
<dbReference type="GO" id="GO:0016887">
    <property type="term" value="F:ATP hydrolysis activity"/>
    <property type="evidence" value="ECO:0007669"/>
    <property type="project" value="RHEA"/>
</dbReference>
<dbReference type="GO" id="GO:0003723">
    <property type="term" value="F:RNA binding"/>
    <property type="evidence" value="ECO:0007669"/>
    <property type="project" value="UniProtKB-KW"/>
</dbReference>
<dbReference type="GO" id="GO:0003724">
    <property type="term" value="F:RNA helicase activity"/>
    <property type="evidence" value="ECO:0007669"/>
    <property type="project" value="UniProtKB-EC"/>
</dbReference>
<dbReference type="GO" id="GO:0006364">
    <property type="term" value="P:rRNA processing"/>
    <property type="evidence" value="ECO:0000250"/>
    <property type="project" value="UniProtKB"/>
</dbReference>
<dbReference type="CDD" id="cd17947">
    <property type="entry name" value="DEADc_DDX27"/>
    <property type="match status" value="1"/>
</dbReference>
<dbReference type="CDD" id="cd18787">
    <property type="entry name" value="SF2_C_DEAD"/>
    <property type="match status" value="1"/>
</dbReference>
<dbReference type="FunFam" id="3.40.50.300:FF:000842">
    <property type="entry name" value="ATP-dependent RNA helicase DRS1"/>
    <property type="match status" value="1"/>
</dbReference>
<dbReference type="Gene3D" id="3.40.50.300">
    <property type="entry name" value="P-loop containing nucleotide triphosphate hydrolases"/>
    <property type="match status" value="2"/>
</dbReference>
<dbReference type="InterPro" id="IPR011545">
    <property type="entry name" value="DEAD/DEAH_box_helicase_dom"/>
</dbReference>
<dbReference type="InterPro" id="IPR050079">
    <property type="entry name" value="DEAD_box_RNA_helicase"/>
</dbReference>
<dbReference type="InterPro" id="IPR014001">
    <property type="entry name" value="Helicase_ATP-bd"/>
</dbReference>
<dbReference type="InterPro" id="IPR001650">
    <property type="entry name" value="Helicase_C-like"/>
</dbReference>
<dbReference type="InterPro" id="IPR027417">
    <property type="entry name" value="P-loop_NTPase"/>
</dbReference>
<dbReference type="InterPro" id="IPR000629">
    <property type="entry name" value="RNA-helicase_DEAD-box_CS"/>
</dbReference>
<dbReference type="InterPro" id="IPR014014">
    <property type="entry name" value="RNA_helicase_DEAD_Q_motif"/>
</dbReference>
<dbReference type="PANTHER" id="PTHR47959:SF1">
    <property type="entry name" value="ATP-DEPENDENT RNA HELICASE DBPA"/>
    <property type="match status" value="1"/>
</dbReference>
<dbReference type="PANTHER" id="PTHR47959">
    <property type="entry name" value="ATP-DEPENDENT RNA HELICASE RHLE-RELATED"/>
    <property type="match status" value="1"/>
</dbReference>
<dbReference type="Pfam" id="PF00270">
    <property type="entry name" value="DEAD"/>
    <property type="match status" value="1"/>
</dbReference>
<dbReference type="Pfam" id="PF00271">
    <property type="entry name" value="Helicase_C"/>
    <property type="match status" value="1"/>
</dbReference>
<dbReference type="SMART" id="SM00487">
    <property type="entry name" value="DEXDc"/>
    <property type="match status" value="1"/>
</dbReference>
<dbReference type="SMART" id="SM00490">
    <property type="entry name" value="HELICc"/>
    <property type="match status" value="1"/>
</dbReference>
<dbReference type="SUPFAM" id="SSF52540">
    <property type="entry name" value="P-loop containing nucleoside triphosphate hydrolases"/>
    <property type="match status" value="2"/>
</dbReference>
<dbReference type="PROSITE" id="PS00039">
    <property type="entry name" value="DEAD_ATP_HELICASE"/>
    <property type="match status" value="1"/>
</dbReference>
<dbReference type="PROSITE" id="PS51192">
    <property type="entry name" value="HELICASE_ATP_BIND_1"/>
    <property type="match status" value="1"/>
</dbReference>
<dbReference type="PROSITE" id="PS51194">
    <property type="entry name" value="HELICASE_CTER"/>
    <property type="match status" value="1"/>
</dbReference>
<dbReference type="PROSITE" id="PS51195">
    <property type="entry name" value="Q_MOTIF"/>
    <property type="match status" value="1"/>
</dbReference>
<feature type="chain" id="PRO_0000327434" description="Probable ATP-dependent RNA helicase ddx27">
    <location>
        <begin position="1"/>
        <end position="783"/>
    </location>
</feature>
<feature type="domain" description="Helicase ATP-binding" evidence="3">
    <location>
        <begin position="221"/>
        <end position="395"/>
    </location>
</feature>
<feature type="domain" description="Helicase C-terminal" evidence="4">
    <location>
        <begin position="406"/>
        <end position="570"/>
    </location>
</feature>
<feature type="region of interest" description="Disordered" evidence="5">
    <location>
        <begin position="1"/>
        <end position="20"/>
    </location>
</feature>
<feature type="region of interest" description="Disordered" evidence="5">
    <location>
        <begin position="56"/>
        <end position="173"/>
    </location>
</feature>
<feature type="region of interest" description="Disordered" evidence="5">
    <location>
        <begin position="665"/>
        <end position="783"/>
    </location>
</feature>
<feature type="coiled-coil region" evidence="2">
    <location>
        <begin position="72"/>
        <end position="180"/>
    </location>
</feature>
<feature type="short sequence motif" description="Q motif">
    <location>
        <begin position="190"/>
        <end position="218"/>
    </location>
</feature>
<feature type="short sequence motif" description="DEAD box">
    <location>
        <begin position="343"/>
        <end position="346"/>
    </location>
</feature>
<feature type="compositionally biased region" description="Polar residues" evidence="5">
    <location>
        <begin position="1"/>
        <end position="14"/>
    </location>
</feature>
<feature type="compositionally biased region" description="Basic and acidic residues" evidence="5">
    <location>
        <begin position="72"/>
        <end position="93"/>
    </location>
</feature>
<feature type="compositionally biased region" description="Low complexity" evidence="5">
    <location>
        <begin position="110"/>
        <end position="125"/>
    </location>
</feature>
<feature type="compositionally biased region" description="Acidic residues" evidence="5">
    <location>
        <begin position="126"/>
        <end position="149"/>
    </location>
</feature>
<feature type="compositionally biased region" description="Low complexity" evidence="5">
    <location>
        <begin position="156"/>
        <end position="167"/>
    </location>
</feature>
<feature type="compositionally biased region" description="Basic and acidic residues" evidence="5">
    <location>
        <begin position="688"/>
        <end position="706"/>
    </location>
</feature>
<feature type="compositionally biased region" description="Basic and acidic residues" evidence="5">
    <location>
        <begin position="715"/>
        <end position="741"/>
    </location>
</feature>
<feature type="compositionally biased region" description="Basic and acidic residues" evidence="5">
    <location>
        <begin position="752"/>
        <end position="761"/>
    </location>
</feature>
<feature type="compositionally biased region" description="Basic residues" evidence="5">
    <location>
        <begin position="762"/>
        <end position="783"/>
    </location>
</feature>
<feature type="binding site" evidence="3">
    <location>
        <begin position="234"/>
        <end position="241"/>
    </location>
    <ligand>
        <name>ATP</name>
        <dbReference type="ChEBI" id="CHEBI:30616"/>
    </ligand>
</feature>
<reference key="1">
    <citation type="journal article" date="2005" name="Nature">
        <title>The genome of the social amoeba Dictyostelium discoideum.</title>
        <authorList>
            <person name="Eichinger L."/>
            <person name="Pachebat J.A."/>
            <person name="Gloeckner G."/>
            <person name="Rajandream M.A."/>
            <person name="Sucgang R."/>
            <person name="Berriman M."/>
            <person name="Song J."/>
            <person name="Olsen R."/>
            <person name="Szafranski K."/>
            <person name="Xu Q."/>
            <person name="Tunggal B."/>
            <person name="Kummerfeld S."/>
            <person name="Madera M."/>
            <person name="Konfortov B.A."/>
            <person name="Rivero F."/>
            <person name="Bankier A.T."/>
            <person name="Lehmann R."/>
            <person name="Hamlin N."/>
            <person name="Davies R."/>
            <person name="Gaudet P."/>
            <person name="Fey P."/>
            <person name="Pilcher K."/>
            <person name="Chen G."/>
            <person name="Saunders D."/>
            <person name="Sodergren E.J."/>
            <person name="Davis P."/>
            <person name="Kerhornou A."/>
            <person name="Nie X."/>
            <person name="Hall N."/>
            <person name="Anjard C."/>
            <person name="Hemphill L."/>
            <person name="Bason N."/>
            <person name="Farbrother P."/>
            <person name="Desany B."/>
            <person name="Just E."/>
            <person name="Morio T."/>
            <person name="Rost R."/>
            <person name="Churcher C.M."/>
            <person name="Cooper J."/>
            <person name="Haydock S."/>
            <person name="van Driessche N."/>
            <person name="Cronin A."/>
            <person name="Goodhead I."/>
            <person name="Muzny D.M."/>
            <person name="Mourier T."/>
            <person name="Pain A."/>
            <person name="Lu M."/>
            <person name="Harper D."/>
            <person name="Lindsay R."/>
            <person name="Hauser H."/>
            <person name="James K.D."/>
            <person name="Quiles M."/>
            <person name="Madan Babu M."/>
            <person name="Saito T."/>
            <person name="Buchrieser C."/>
            <person name="Wardroper A."/>
            <person name="Felder M."/>
            <person name="Thangavelu M."/>
            <person name="Johnson D."/>
            <person name="Knights A."/>
            <person name="Loulseged H."/>
            <person name="Mungall K.L."/>
            <person name="Oliver K."/>
            <person name="Price C."/>
            <person name="Quail M.A."/>
            <person name="Urushihara H."/>
            <person name="Hernandez J."/>
            <person name="Rabbinowitsch E."/>
            <person name="Steffen D."/>
            <person name="Sanders M."/>
            <person name="Ma J."/>
            <person name="Kohara Y."/>
            <person name="Sharp S."/>
            <person name="Simmonds M.N."/>
            <person name="Spiegler S."/>
            <person name="Tivey A."/>
            <person name="Sugano S."/>
            <person name="White B."/>
            <person name="Walker D."/>
            <person name="Woodward J.R."/>
            <person name="Winckler T."/>
            <person name="Tanaka Y."/>
            <person name="Shaulsky G."/>
            <person name="Schleicher M."/>
            <person name="Weinstock G.M."/>
            <person name="Rosenthal A."/>
            <person name="Cox E.C."/>
            <person name="Chisholm R.L."/>
            <person name="Gibbs R.A."/>
            <person name="Loomis W.F."/>
            <person name="Platzer M."/>
            <person name="Kay R.R."/>
            <person name="Williams J.G."/>
            <person name="Dear P.H."/>
            <person name="Noegel A.A."/>
            <person name="Barrell B.G."/>
            <person name="Kuspa A."/>
        </authorList>
    </citation>
    <scope>NUCLEOTIDE SEQUENCE [LARGE SCALE GENOMIC DNA]</scope>
    <source>
        <strain>AX4</strain>
    </source>
</reference>
<keyword id="KW-0067">ATP-binding</keyword>
<keyword id="KW-0158">Chromosome</keyword>
<keyword id="KW-0175">Coiled coil</keyword>
<keyword id="KW-0347">Helicase</keyword>
<keyword id="KW-0378">Hydrolase</keyword>
<keyword id="KW-0547">Nucleotide-binding</keyword>
<keyword id="KW-0539">Nucleus</keyword>
<keyword id="KW-1185">Reference proteome</keyword>
<keyword id="KW-0690">Ribosome biogenesis</keyword>
<keyword id="KW-0694">RNA-binding</keyword>
<keyword id="KW-0698">rRNA processing</keyword>
<gene>
    <name type="primary">ddx27</name>
    <name type="ORF">DDB_G0281711</name>
</gene>
<comment type="function">
    <text evidence="1">Probable ATP-dependent RNA helicase. Component of the nucleolar ribosomal RNA (rRNA) processing machinery that may be involved in ribosome biogenesis.</text>
</comment>
<comment type="catalytic activity">
    <reaction>
        <text>ATP + H2O = ADP + phosphate + H(+)</text>
        <dbReference type="Rhea" id="RHEA:13065"/>
        <dbReference type="ChEBI" id="CHEBI:15377"/>
        <dbReference type="ChEBI" id="CHEBI:15378"/>
        <dbReference type="ChEBI" id="CHEBI:30616"/>
        <dbReference type="ChEBI" id="CHEBI:43474"/>
        <dbReference type="ChEBI" id="CHEBI:456216"/>
        <dbReference type="EC" id="3.6.4.13"/>
    </reaction>
</comment>
<comment type="subcellular location">
    <subcellularLocation>
        <location evidence="1">Nucleus</location>
        <location evidence="1">Nucleolus</location>
    </subcellularLocation>
    <subcellularLocation>
        <location evidence="1">Chromosome</location>
    </subcellularLocation>
</comment>
<comment type="domain">
    <text>The Q motif is unique to and characteristic of the DEAD box family of RNA helicases and controls ATP binding and hydrolysis.</text>
</comment>
<comment type="domain">
    <text evidence="1">The C-terminal domain regulates nucleolar localization.</text>
</comment>
<comment type="similarity">
    <text evidence="6">Belongs to the DEAD box helicase family. DDX27/DRS1 subfamily.</text>
</comment>
<sequence>MLVDNQTSTTTNLVGTKRKSPENDFIMTIDIAGDDDFVDDDENDDDEDLKEDFFFEESDKPQLPWDFAPTIEKMKQQTHKKTDGQTSLEDKINQRKTVKKLKADDDKSVTTKTTNNNKSKKSNNNDNDDDDEEVNEEEEEEEEEEDNENEKEINKKQQQQQQQSNKQTTDKIKVLQSNRKLKKIVEEELPTFEELHLSRPLLKAVQKLGFSQPTPIQAKAIPLALNGKDILASASTGSGKTAAFLLPVLERLLFRDSEYRAIRVLILLPTRELALQCQSVMENLAQFSNITSCLIVGGLSNKAQEVELRKSPDVVIATPGRLIDHLLNAHGIGLDDLEILILDEADRLLDMGFKDEINKIVESCPTNRQTMLFSATLNDEVKTLAKLSLQQPIRVQVDALMQVTSTLEQEFVKIKPQHLSDRPAILLSLCTRVFNQGGTIIFCRSKKEVHRLRIIFGLSDLKAAELHGNLSQEQRFDSLQQFRDGQVNYLLASDVASRGLDIIGVKTVINYNMPNNMANYIHRVGRTARAGMDGKSCSFITDNDRKLLKDIVTKARNKAKSRSVSQDNVNFWRNRIEELTEDIKSIVREEMKEADLRKAEKTLDKAEKIISNADANVETPKVWYKTKQEEDKSKELWKIENNIVNPGKKLKAPIDVTGVNNVPSIKKLKQKKDPYYGLSRKQRRHRQFKEEFEREQQEERKRKGGDDGDDNEEIDSGKMFERSQRAQKSSGKETKRIESLRRNYMAGGALTDQEKQRVDNKKSKKNKRMIVNKKEKKQRLSKK</sequence>
<accession>Q54TJ4</accession>
<name>DDX27_DICDI</name>
<protein>
    <recommendedName>
        <fullName>Probable ATP-dependent RNA helicase ddx27</fullName>
        <ecNumber>3.6.4.13</ecNumber>
    </recommendedName>
    <alternativeName>
        <fullName>DEAD box protein 27</fullName>
    </alternativeName>
</protein>